<sequence length="150" mass="16435">MVHATSPLLLLLLLSLALVAPSLSARKCSLTGEWDNDLGSIMTIGAVNDNGEFDGTYITAVADNPGNITLSPLLGIQHKRASQPTFGFTVHWNFSESTSVFVGQCFVDRSGKEVLKTKWLQRLAVDDISDDWIATRVGNNDFTRQHTVEE</sequence>
<accession>P56732</accession>
<accession>Q546L5</accession>
<organism>
    <name type="scientific">Gallus gallus</name>
    <name type="common">Chicken</name>
    <dbReference type="NCBI Taxonomy" id="9031"/>
    <lineage>
        <taxon>Eukaryota</taxon>
        <taxon>Metazoa</taxon>
        <taxon>Chordata</taxon>
        <taxon>Craniata</taxon>
        <taxon>Vertebrata</taxon>
        <taxon>Euteleostomi</taxon>
        <taxon>Archelosauria</taxon>
        <taxon>Archosauria</taxon>
        <taxon>Dinosauria</taxon>
        <taxon>Saurischia</taxon>
        <taxon>Theropoda</taxon>
        <taxon>Coelurosauria</taxon>
        <taxon>Aves</taxon>
        <taxon>Neognathae</taxon>
        <taxon>Galloanserae</taxon>
        <taxon>Galliformes</taxon>
        <taxon>Phasianidae</taxon>
        <taxon>Phasianinae</taxon>
        <taxon>Gallus</taxon>
    </lineage>
</organism>
<name>AVR2_CHICK</name>
<dbReference type="EMBL" id="Z21554">
    <property type="status" value="NOT_ANNOTATED_CDS"/>
    <property type="molecule type" value="Genomic_DNA"/>
</dbReference>
<dbReference type="EMBL" id="Z21535">
    <property type="status" value="NOT_ANNOTATED_CDS"/>
    <property type="molecule type" value="mRNA"/>
</dbReference>
<dbReference type="EMBL" id="AJ311648">
    <property type="protein sequence ID" value="CAC34570.1"/>
    <property type="molecule type" value="Genomic_DNA"/>
</dbReference>
<dbReference type="PIR" id="S42202">
    <property type="entry name" value="S42202"/>
</dbReference>
<dbReference type="RefSeq" id="NP_001025519.1">
    <property type="nucleotide sequence ID" value="NM_001030348.2"/>
</dbReference>
<dbReference type="PDB" id="1WBI">
    <property type="method" value="X-ray"/>
    <property type="resolution" value="1.40 A"/>
    <property type="chains" value="A/B/C/D/E/F/G/H=25-150"/>
</dbReference>
<dbReference type="PDBsum" id="1WBI"/>
<dbReference type="SMR" id="P56732"/>
<dbReference type="FunCoup" id="P56732">
    <property type="interactions" value="7"/>
</dbReference>
<dbReference type="GlyCosmos" id="P56732">
    <property type="glycosylation" value="2 sites, No reported glycans"/>
</dbReference>
<dbReference type="GlyGen" id="P56732">
    <property type="glycosylation" value="2 sites"/>
</dbReference>
<dbReference type="PaxDb" id="9031-ENSGALP00000038525"/>
<dbReference type="Ensembl" id="ENSGALT00010030830.1">
    <property type="protein sequence ID" value="ENSGALP00010017889.1"/>
    <property type="gene ID" value="ENSGALG00010012856.1"/>
</dbReference>
<dbReference type="GeneID" id="395367"/>
<dbReference type="KEGG" id="gga:395367"/>
<dbReference type="CTD" id="395367"/>
<dbReference type="VEuPathDB" id="HostDB:geneid_395367"/>
<dbReference type="eggNOG" id="ENOG502S55G">
    <property type="taxonomic scope" value="Eukaryota"/>
</dbReference>
<dbReference type="GeneTree" id="ENSGT00390000001847"/>
<dbReference type="HOGENOM" id="CLU_122441_0_0_1"/>
<dbReference type="InParanoid" id="P56732"/>
<dbReference type="OMA" id="EVLETIW"/>
<dbReference type="OrthoDB" id="2821340at2759"/>
<dbReference type="EvolutionaryTrace" id="P56732"/>
<dbReference type="PRO" id="PR:P56732"/>
<dbReference type="Proteomes" id="UP000000539">
    <property type="component" value="Chromosome Z"/>
</dbReference>
<dbReference type="GO" id="GO:0005576">
    <property type="term" value="C:extracellular region"/>
    <property type="evidence" value="ECO:0007669"/>
    <property type="project" value="UniProtKB-SubCell"/>
</dbReference>
<dbReference type="GO" id="GO:0009374">
    <property type="term" value="F:biotin binding"/>
    <property type="evidence" value="ECO:0000314"/>
    <property type="project" value="UniProtKB"/>
</dbReference>
<dbReference type="GO" id="GO:0015878">
    <property type="term" value="P:biotin transport"/>
    <property type="evidence" value="ECO:0000304"/>
    <property type="project" value="UniProtKB"/>
</dbReference>
<dbReference type="FunFam" id="2.40.128.30:FF:000001">
    <property type="entry name" value="Avidin-related protein 2"/>
    <property type="match status" value="1"/>
</dbReference>
<dbReference type="Gene3D" id="2.40.128.30">
    <property type="entry name" value="Avidin-like"/>
    <property type="match status" value="1"/>
</dbReference>
<dbReference type="InterPro" id="IPR005469">
    <property type="entry name" value="Avidin"/>
</dbReference>
<dbReference type="InterPro" id="IPR017889">
    <property type="entry name" value="Avidin-like_CS"/>
</dbReference>
<dbReference type="InterPro" id="IPR036896">
    <property type="entry name" value="Avidin-like_sf"/>
</dbReference>
<dbReference type="InterPro" id="IPR005468">
    <property type="entry name" value="Avidin/str"/>
</dbReference>
<dbReference type="InterPro" id="IPR051764">
    <property type="entry name" value="Avidin/Streptavidin-rel"/>
</dbReference>
<dbReference type="PANTHER" id="PTHR34399:SF3">
    <property type="entry name" value="AVID PROTEIN-RELATED"/>
    <property type="match status" value="1"/>
</dbReference>
<dbReference type="PANTHER" id="PTHR34399">
    <property type="entry name" value="AVIDIN-RELATED"/>
    <property type="match status" value="1"/>
</dbReference>
<dbReference type="Pfam" id="PF01382">
    <property type="entry name" value="Avidin"/>
    <property type="match status" value="1"/>
</dbReference>
<dbReference type="PRINTS" id="PR00709">
    <property type="entry name" value="AVIDIN"/>
</dbReference>
<dbReference type="SUPFAM" id="SSF50876">
    <property type="entry name" value="Avidin/streptavidin"/>
    <property type="match status" value="1"/>
</dbReference>
<dbReference type="PROSITE" id="PS00577">
    <property type="entry name" value="AVIDIN_1"/>
    <property type="match status" value="1"/>
</dbReference>
<dbReference type="PROSITE" id="PS51326">
    <property type="entry name" value="AVIDIN_2"/>
    <property type="match status" value="1"/>
</dbReference>
<reference key="1">
    <citation type="journal article" date="1994" name="Eur. J. Biochem.">
        <title>Molecular cloning and nucleotide sequence of chicken avidin-related genes 1-5.</title>
        <authorList>
            <person name="Keinaenen R.A."/>
            <person name="Wallen M.J."/>
            <person name="Kristo P.A."/>
            <person name="Laukkanen M.O."/>
            <person name="Toimela T.A."/>
            <person name="Helenius M.A."/>
            <person name="Kulomaa M.S."/>
        </authorList>
    </citation>
    <scope>NUCLEOTIDE SEQUENCE [GENOMIC DNA]</scope>
    <source>
        <strain>White leghorn</strain>
        <tissue>Oviduct</tissue>
    </source>
</reference>
<reference key="2">
    <citation type="journal article" date="2000" name="Anim. Genet.">
        <title>Characterization and chromosomal localization of the chicken avidin gene family.</title>
        <authorList>
            <person name="Ahlroth M.K."/>
            <person name="Kola E.H."/>
            <person name="Ewald D."/>
            <person name="Masabanda J."/>
            <person name="Sazanov A."/>
            <person name="Fries R."/>
            <person name="Kulomaa M.S."/>
        </authorList>
    </citation>
    <scope>NUCLEOTIDE SEQUENCE [GENOMIC DNA]</scope>
</reference>
<reference key="3">
    <citation type="journal article" date="2002" name="Biochem. J.">
        <title>Chicken avidin-related proteins show altered biotin-binding and physico-chemical properties as compared with avidin.</title>
        <authorList>
            <person name="Laitinen O.H."/>
            <person name="Hytoenen V.P."/>
            <person name="Ahlroth M.K."/>
            <person name="Pentikaeinen O.T."/>
            <person name="Gallagher C."/>
            <person name="Nordlund H.R."/>
            <person name="Ovod V."/>
            <person name="Marttila A.T."/>
            <person name="Porkka E."/>
            <person name="Heino S."/>
            <person name="Johnson M.S."/>
            <person name="Airenne K.J."/>
            <person name="Kulomaa M.S."/>
        </authorList>
    </citation>
    <scope>FUNCTION</scope>
    <scope>SUBUNIT</scope>
    <scope>GLYCOSYLATION</scope>
</reference>
<reference evidence="6" key="4">
    <citation type="journal article" date="2005" name="BMC Biotechnol.">
        <title>Avidin related protein 2 shows unique structural and functional features among the avidin protein family.</title>
        <authorList>
            <person name="Hytoenen V.P."/>
            <person name="Maeaettae J.A."/>
            <person name="Kidron H."/>
            <person name="Halling K.K."/>
            <person name="Hoerhae J."/>
            <person name="Kulomaa T."/>
            <person name="Nyholm T.K."/>
            <person name="Johnson M.S."/>
            <person name="Salminen T.A."/>
            <person name="Kulomaa M.S."/>
            <person name="Airenne T.T."/>
        </authorList>
    </citation>
    <scope>X-RAY CRYSTALLOGRAPHY (1.4 ANGSTROMS) OF 25-150 IN COMPLEX WITH BIOTIN</scope>
    <scope>DISULFIDE BOND</scope>
    <scope>SUBUNIT</scope>
    <scope>MASS SPECTROMETRY</scope>
</reference>
<feature type="signal peptide" evidence="1">
    <location>
        <begin position="1"/>
        <end position="24"/>
    </location>
</feature>
<feature type="chain" id="PRO_0000002724" description="Avidin-related protein 2">
    <location>
        <begin position="25"/>
        <end position="150"/>
    </location>
</feature>
<feature type="domain" description="Avidin-like" evidence="2">
    <location>
        <begin position="26"/>
        <end position="147"/>
    </location>
</feature>
<feature type="binding site" evidence="4 6">
    <location>
        <position position="36"/>
    </location>
    <ligand>
        <name>biotin</name>
        <dbReference type="ChEBI" id="CHEBI:57586"/>
    </ligand>
</feature>
<feature type="binding site" evidence="4 6">
    <location>
        <position position="40"/>
    </location>
    <ligand>
        <name>biotin</name>
        <dbReference type="ChEBI" id="CHEBI:57586"/>
    </ligand>
</feature>
<feature type="binding site" evidence="4 6">
    <location>
        <position position="57"/>
    </location>
    <ligand>
        <name>biotin</name>
        <dbReference type="ChEBI" id="CHEBI:57586"/>
    </ligand>
</feature>
<feature type="binding site" evidence="4 6">
    <location>
        <position position="59"/>
    </location>
    <ligand>
        <name>biotin</name>
        <dbReference type="ChEBI" id="CHEBI:57586"/>
    </ligand>
</feature>
<feature type="binding site" evidence="4 6">
    <location>
        <position position="63"/>
    </location>
    <ligand>
        <name>biotin</name>
        <dbReference type="ChEBI" id="CHEBI:57586"/>
    </ligand>
</feature>
<feature type="binding site" evidence="4 6">
    <location>
        <position position="95"/>
    </location>
    <ligand>
        <name>biotin</name>
        <dbReference type="ChEBI" id="CHEBI:57586"/>
    </ligand>
</feature>
<feature type="binding site" evidence="4 6">
    <location>
        <position position="99"/>
    </location>
    <ligand>
        <name>biotin</name>
        <dbReference type="ChEBI" id="CHEBI:57586"/>
    </ligand>
</feature>
<feature type="binding site" evidence="4 6">
    <location>
        <position position="140"/>
    </location>
    <ligand>
        <name>biotin</name>
        <dbReference type="ChEBI" id="CHEBI:57586"/>
    </ligand>
</feature>
<feature type="glycosylation site" description="N-linked (GlcNAc...) asparagine" evidence="1">
    <location>
        <position position="67"/>
    </location>
</feature>
<feature type="glycosylation site" description="N-linked (GlcNAc...) asparagine" evidence="1">
    <location>
        <position position="93"/>
    </location>
</feature>
<feature type="disulfide bond" evidence="4 6">
    <location>
        <begin position="28"/>
        <end position="105"/>
    </location>
</feature>
<feature type="strand" evidence="7">
    <location>
        <begin position="32"/>
        <end position="36"/>
    </location>
</feature>
<feature type="strand" evidence="7">
    <location>
        <begin position="41"/>
        <end position="44"/>
    </location>
</feature>
<feature type="strand" evidence="7">
    <location>
        <begin position="51"/>
        <end position="58"/>
    </location>
</feature>
<feature type="helix" evidence="7">
    <location>
        <begin position="65"/>
        <end position="67"/>
    </location>
</feature>
<feature type="strand" evidence="7">
    <location>
        <begin position="71"/>
        <end position="77"/>
    </location>
</feature>
<feature type="strand" evidence="7">
    <location>
        <begin position="79"/>
        <end position="83"/>
    </location>
</feature>
<feature type="strand" evidence="7">
    <location>
        <begin position="85"/>
        <end position="91"/>
    </location>
</feature>
<feature type="strand" evidence="7">
    <location>
        <begin position="98"/>
        <end position="107"/>
    </location>
</feature>
<feature type="strand" evidence="7">
    <location>
        <begin position="113"/>
        <end position="122"/>
    </location>
</feature>
<feature type="helix" evidence="7">
    <location>
        <begin position="128"/>
        <end position="133"/>
    </location>
</feature>
<feature type="strand" evidence="7">
    <location>
        <begin position="135"/>
        <end position="144"/>
    </location>
</feature>
<evidence type="ECO:0000255" key="1"/>
<evidence type="ECO:0000255" key="2">
    <source>
        <dbReference type="PROSITE-ProRule" id="PRU00656"/>
    </source>
</evidence>
<evidence type="ECO:0000269" key="3">
    <source>
    </source>
</evidence>
<evidence type="ECO:0000269" key="4">
    <source>
    </source>
</evidence>
<evidence type="ECO:0000305" key="5"/>
<evidence type="ECO:0007744" key="6">
    <source>
        <dbReference type="PDB" id="1WBI"/>
    </source>
</evidence>
<evidence type="ECO:0007829" key="7">
    <source>
        <dbReference type="PDB" id="1WBI"/>
    </source>
</evidence>
<proteinExistence type="evidence at protein level"/>
<protein>
    <recommendedName>
        <fullName>Avidin-related protein 2</fullName>
    </recommendedName>
</protein>
<comment type="function">
    <text evidence="3">Forms a strong non-covalent specific complex with biotin.</text>
</comment>
<comment type="subunit">
    <text evidence="2 3 4">Homotetramer.</text>
</comment>
<comment type="subcellular location">
    <subcellularLocation>
        <location evidence="2">Secreted</location>
    </subcellularLocation>
</comment>
<comment type="PTM">
    <text evidence="3">Glycosylated.</text>
</comment>
<comment type="mass spectrometry" mass="14310.0" error="0.3" method="Electrospray" evidence="4"/>
<comment type="similarity">
    <text evidence="5">Belongs to the avidin/streptavidin family.</text>
</comment>
<gene>
    <name type="primary">AVR2</name>
</gene>
<keyword id="KW-0002">3D-structure</keyword>
<keyword id="KW-0092">Biotin</keyword>
<keyword id="KW-1015">Disulfide bond</keyword>
<keyword id="KW-0325">Glycoprotein</keyword>
<keyword id="KW-1185">Reference proteome</keyword>
<keyword id="KW-0964">Secreted</keyword>
<keyword id="KW-0732">Signal</keyword>